<gene>
    <name evidence="1" type="primary">obg</name>
    <name type="ordered locus">Ppro_2954</name>
</gene>
<organism>
    <name type="scientific">Pelobacter propionicus (strain DSM 2379 / NBRC 103807 / OttBd1)</name>
    <dbReference type="NCBI Taxonomy" id="338966"/>
    <lineage>
        <taxon>Bacteria</taxon>
        <taxon>Pseudomonadati</taxon>
        <taxon>Thermodesulfobacteriota</taxon>
        <taxon>Desulfuromonadia</taxon>
        <taxon>Desulfuromonadales</taxon>
        <taxon>Desulfuromonadaceae</taxon>
        <taxon>Pelobacter</taxon>
    </lineage>
</organism>
<name>OBG_PELPD</name>
<feature type="chain" id="PRO_0000386114" description="GTPase Obg">
    <location>
        <begin position="1"/>
        <end position="338"/>
    </location>
</feature>
<feature type="domain" description="Obg" evidence="2">
    <location>
        <begin position="1"/>
        <end position="159"/>
    </location>
</feature>
<feature type="domain" description="OBG-type G" evidence="1">
    <location>
        <begin position="160"/>
        <end position="331"/>
    </location>
</feature>
<feature type="binding site" evidence="1">
    <location>
        <begin position="166"/>
        <end position="173"/>
    </location>
    <ligand>
        <name>GTP</name>
        <dbReference type="ChEBI" id="CHEBI:37565"/>
    </ligand>
</feature>
<feature type="binding site" evidence="1">
    <location>
        <position position="173"/>
    </location>
    <ligand>
        <name>Mg(2+)</name>
        <dbReference type="ChEBI" id="CHEBI:18420"/>
    </ligand>
</feature>
<feature type="binding site" evidence="1">
    <location>
        <begin position="191"/>
        <end position="195"/>
    </location>
    <ligand>
        <name>GTP</name>
        <dbReference type="ChEBI" id="CHEBI:37565"/>
    </ligand>
</feature>
<feature type="binding site" evidence="1">
    <location>
        <position position="193"/>
    </location>
    <ligand>
        <name>Mg(2+)</name>
        <dbReference type="ChEBI" id="CHEBI:18420"/>
    </ligand>
</feature>
<feature type="binding site" evidence="1">
    <location>
        <begin position="213"/>
        <end position="216"/>
    </location>
    <ligand>
        <name>GTP</name>
        <dbReference type="ChEBI" id="CHEBI:37565"/>
    </ligand>
</feature>
<feature type="binding site" evidence="1">
    <location>
        <begin position="283"/>
        <end position="286"/>
    </location>
    <ligand>
        <name>GTP</name>
        <dbReference type="ChEBI" id="CHEBI:37565"/>
    </ligand>
</feature>
<feature type="binding site" evidence="1">
    <location>
        <begin position="312"/>
        <end position="314"/>
    </location>
    <ligand>
        <name>GTP</name>
        <dbReference type="ChEBI" id="CHEBI:37565"/>
    </ligand>
</feature>
<reference key="1">
    <citation type="submission" date="2006-10" db="EMBL/GenBank/DDBJ databases">
        <title>Complete sequence of chromosome of Pelobacter propionicus DSM 2379.</title>
        <authorList>
            <consortium name="US DOE Joint Genome Institute"/>
            <person name="Copeland A."/>
            <person name="Lucas S."/>
            <person name="Lapidus A."/>
            <person name="Barry K."/>
            <person name="Detter J.C."/>
            <person name="Glavina del Rio T."/>
            <person name="Hammon N."/>
            <person name="Israni S."/>
            <person name="Dalin E."/>
            <person name="Tice H."/>
            <person name="Pitluck S."/>
            <person name="Saunders E."/>
            <person name="Brettin T."/>
            <person name="Bruce D."/>
            <person name="Han C."/>
            <person name="Tapia R."/>
            <person name="Schmutz J."/>
            <person name="Larimer F."/>
            <person name="Land M."/>
            <person name="Hauser L."/>
            <person name="Kyrpides N."/>
            <person name="Kim E."/>
            <person name="Lovley D."/>
            <person name="Richardson P."/>
        </authorList>
    </citation>
    <scope>NUCLEOTIDE SEQUENCE [LARGE SCALE GENOMIC DNA]</scope>
    <source>
        <strain>DSM 2379 / NBRC 103807 / OttBd1</strain>
    </source>
</reference>
<sequence length="338" mass="36506">MKFIDEVTLFASSGHGGAGCVAFRREKFIEFGGPNGGDGGKGGDVVFVAKAGLSSLLELRHRPHQKAEKGHNGQGKNRHGASGADLVIKVPVGTVISDAESGEQLADLAENGQRVVLLKGGRGGQGNARFASATHKTPRFAQPGEEGQEAKLRLELKLMADVGLLGLPNAGKSSLITKISAARPKIADYPFTTIKPSLGVVPYKNARSFVMADIPGIIEGAHEGAGLGHRFLKHLERSGILLHLVDISWMPERDPLAEYEAVTRELTMFSPELAAKEQVVVITKLDLPQTREKLAEIRSWFEERGIRVFPISSATGEGVGELLDEIARRLWGRIEEEW</sequence>
<accession>A1AT81</accession>
<proteinExistence type="inferred from homology"/>
<evidence type="ECO:0000255" key="1">
    <source>
        <dbReference type="HAMAP-Rule" id="MF_01454"/>
    </source>
</evidence>
<evidence type="ECO:0000255" key="2">
    <source>
        <dbReference type="PROSITE-ProRule" id="PRU01231"/>
    </source>
</evidence>
<comment type="function">
    <text evidence="1">An essential GTPase which binds GTP, GDP and possibly (p)ppGpp with moderate affinity, with high nucleotide exchange rates and a fairly low GTP hydrolysis rate. Plays a role in control of the cell cycle, stress response, ribosome biogenesis and in those bacteria that undergo differentiation, in morphogenesis control.</text>
</comment>
<comment type="cofactor">
    <cofactor evidence="1">
        <name>Mg(2+)</name>
        <dbReference type="ChEBI" id="CHEBI:18420"/>
    </cofactor>
</comment>
<comment type="subunit">
    <text evidence="1">Monomer.</text>
</comment>
<comment type="subcellular location">
    <subcellularLocation>
        <location evidence="1">Cytoplasm</location>
    </subcellularLocation>
</comment>
<comment type="similarity">
    <text evidence="1">Belongs to the TRAFAC class OBG-HflX-like GTPase superfamily. OBG GTPase family.</text>
</comment>
<protein>
    <recommendedName>
        <fullName evidence="1">GTPase Obg</fullName>
        <ecNumber evidence="1">3.6.5.-</ecNumber>
    </recommendedName>
    <alternativeName>
        <fullName evidence="1">GTP-binding protein Obg</fullName>
    </alternativeName>
</protein>
<dbReference type="EC" id="3.6.5.-" evidence="1"/>
<dbReference type="EMBL" id="CP000482">
    <property type="protein sequence ID" value="ABL00552.1"/>
    <property type="molecule type" value="Genomic_DNA"/>
</dbReference>
<dbReference type="RefSeq" id="WP_011736787.1">
    <property type="nucleotide sequence ID" value="NC_008609.1"/>
</dbReference>
<dbReference type="SMR" id="A1AT81"/>
<dbReference type="STRING" id="338966.Ppro_2954"/>
<dbReference type="KEGG" id="ppd:Ppro_2954"/>
<dbReference type="eggNOG" id="COG0536">
    <property type="taxonomic scope" value="Bacteria"/>
</dbReference>
<dbReference type="HOGENOM" id="CLU_011747_2_0_7"/>
<dbReference type="OrthoDB" id="9807318at2"/>
<dbReference type="Proteomes" id="UP000006732">
    <property type="component" value="Chromosome"/>
</dbReference>
<dbReference type="GO" id="GO:0005737">
    <property type="term" value="C:cytoplasm"/>
    <property type="evidence" value="ECO:0007669"/>
    <property type="project" value="UniProtKB-SubCell"/>
</dbReference>
<dbReference type="GO" id="GO:0005525">
    <property type="term" value="F:GTP binding"/>
    <property type="evidence" value="ECO:0007669"/>
    <property type="project" value="UniProtKB-UniRule"/>
</dbReference>
<dbReference type="GO" id="GO:0003924">
    <property type="term" value="F:GTPase activity"/>
    <property type="evidence" value="ECO:0007669"/>
    <property type="project" value="UniProtKB-UniRule"/>
</dbReference>
<dbReference type="GO" id="GO:0000287">
    <property type="term" value="F:magnesium ion binding"/>
    <property type="evidence" value="ECO:0007669"/>
    <property type="project" value="InterPro"/>
</dbReference>
<dbReference type="GO" id="GO:0042254">
    <property type="term" value="P:ribosome biogenesis"/>
    <property type="evidence" value="ECO:0007669"/>
    <property type="project" value="UniProtKB-UniRule"/>
</dbReference>
<dbReference type="CDD" id="cd01898">
    <property type="entry name" value="Obg"/>
    <property type="match status" value="1"/>
</dbReference>
<dbReference type="FunFam" id="2.70.210.12:FF:000001">
    <property type="entry name" value="GTPase Obg"/>
    <property type="match status" value="1"/>
</dbReference>
<dbReference type="Gene3D" id="2.70.210.12">
    <property type="entry name" value="GTP1/OBG domain"/>
    <property type="match status" value="1"/>
</dbReference>
<dbReference type="Gene3D" id="3.40.50.300">
    <property type="entry name" value="P-loop containing nucleotide triphosphate hydrolases"/>
    <property type="match status" value="1"/>
</dbReference>
<dbReference type="HAMAP" id="MF_01454">
    <property type="entry name" value="GTPase_Obg"/>
    <property type="match status" value="1"/>
</dbReference>
<dbReference type="InterPro" id="IPR031167">
    <property type="entry name" value="G_OBG"/>
</dbReference>
<dbReference type="InterPro" id="IPR006073">
    <property type="entry name" value="GTP-bd"/>
</dbReference>
<dbReference type="InterPro" id="IPR014100">
    <property type="entry name" value="GTP-bd_Obg/CgtA"/>
</dbReference>
<dbReference type="InterPro" id="IPR006074">
    <property type="entry name" value="GTP1-OBG_CS"/>
</dbReference>
<dbReference type="InterPro" id="IPR006169">
    <property type="entry name" value="GTP1_OBG_dom"/>
</dbReference>
<dbReference type="InterPro" id="IPR036726">
    <property type="entry name" value="GTP1_OBG_dom_sf"/>
</dbReference>
<dbReference type="InterPro" id="IPR045086">
    <property type="entry name" value="OBG_GTPase"/>
</dbReference>
<dbReference type="InterPro" id="IPR027417">
    <property type="entry name" value="P-loop_NTPase"/>
</dbReference>
<dbReference type="NCBIfam" id="TIGR02729">
    <property type="entry name" value="Obg_CgtA"/>
    <property type="match status" value="1"/>
</dbReference>
<dbReference type="NCBIfam" id="NF008954">
    <property type="entry name" value="PRK12296.1"/>
    <property type="match status" value="1"/>
</dbReference>
<dbReference type="NCBIfam" id="NF008955">
    <property type="entry name" value="PRK12297.1"/>
    <property type="match status" value="1"/>
</dbReference>
<dbReference type="NCBIfam" id="NF008956">
    <property type="entry name" value="PRK12299.1"/>
    <property type="match status" value="1"/>
</dbReference>
<dbReference type="PANTHER" id="PTHR11702">
    <property type="entry name" value="DEVELOPMENTALLY REGULATED GTP-BINDING PROTEIN-RELATED"/>
    <property type="match status" value="1"/>
</dbReference>
<dbReference type="PANTHER" id="PTHR11702:SF31">
    <property type="entry name" value="MITOCHONDRIAL RIBOSOME-ASSOCIATED GTPASE 2"/>
    <property type="match status" value="1"/>
</dbReference>
<dbReference type="Pfam" id="PF01018">
    <property type="entry name" value="GTP1_OBG"/>
    <property type="match status" value="1"/>
</dbReference>
<dbReference type="Pfam" id="PF01926">
    <property type="entry name" value="MMR_HSR1"/>
    <property type="match status" value="1"/>
</dbReference>
<dbReference type="PIRSF" id="PIRSF002401">
    <property type="entry name" value="GTP_bd_Obg/CgtA"/>
    <property type="match status" value="1"/>
</dbReference>
<dbReference type="PRINTS" id="PR00326">
    <property type="entry name" value="GTP1OBG"/>
</dbReference>
<dbReference type="SUPFAM" id="SSF82051">
    <property type="entry name" value="Obg GTP-binding protein N-terminal domain"/>
    <property type="match status" value="1"/>
</dbReference>
<dbReference type="SUPFAM" id="SSF52540">
    <property type="entry name" value="P-loop containing nucleoside triphosphate hydrolases"/>
    <property type="match status" value="1"/>
</dbReference>
<dbReference type="PROSITE" id="PS51710">
    <property type="entry name" value="G_OBG"/>
    <property type="match status" value="1"/>
</dbReference>
<dbReference type="PROSITE" id="PS00905">
    <property type="entry name" value="GTP1_OBG"/>
    <property type="match status" value="1"/>
</dbReference>
<dbReference type="PROSITE" id="PS51883">
    <property type="entry name" value="OBG"/>
    <property type="match status" value="1"/>
</dbReference>
<keyword id="KW-0963">Cytoplasm</keyword>
<keyword id="KW-0342">GTP-binding</keyword>
<keyword id="KW-0378">Hydrolase</keyword>
<keyword id="KW-0460">Magnesium</keyword>
<keyword id="KW-0479">Metal-binding</keyword>
<keyword id="KW-0547">Nucleotide-binding</keyword>
<keyword id="KW-1185">Reference proteome</keyword>